<feature type="chain" id="PRO_1000122242" description="Integration host factor subunit beta">
    <location>
        <begin position="1"/>
        <end position="94"/>
    </location>
</feature>
<gene>
    <name evidence="1" type="primary">ihfB</name>
    <name evidence="1" type="synonym">himD</name>
    <name type="ordered locus">SeSA_A1095</name>
</gene>
<dbReference type="EMBL" id="CP001127">
    <property type="protein sequence ID" value="ACF89409.1"/>
    <property type="molecule type" value="Genomic_DNA"/>
</dbReference>
<dbReference type="RefSeq" id="WP_000167332.1">
    <property type="nucleotide sequence ID" value="NC_011094.1"/>
</dbReference>
<dbReference type="SMR" id="B4TRU3"/>
<dbReference type="GeneID" id="84237116"/>
<dbReference type="KEGG" id="sew:SeSA_A1095"/>
<dbReference type="HOGENOM" id="CLU_105066_2_0_6"/>
<dbReference type="Proteomes" id="UP000001865">
    <property type="component" value="Chromosome"/>
</dbReference>
<dbReference type="GO" id="GO:0005694">
    <property type="term" value="C:chromosome"/>
    <property type="evidence" value="ECO:0007669"/>
    <property type="project" value="InterPro"/>
</dbReference>
<dbReference type="GO" id="GO:0005829">
    <property type="term" value="C:cytosol"/>
    <property type="evidence" value="ECO:0007669"/>
    <property type="project" value="TreeGrafter"/>
</dbReference>
<dbReference type="GO" id="GO:0003677">
    <property type="term" value="F:DNA binding"/>
    <property type="evidence" value="ECO:0007669"/>
    <property type="project" value="UniProtKB-UniRule"/>
</dbReference>
<dbReference type="GO" id="GO:0030527">
    <property type="term" value="F:structural constituent of chromatin"/>
    <property type="evidence" value="ECO:0007669"/>
    <property type="project" value="InterPro"/>
</dbReference>
<dbReference type="GO" id="GO:0006310">
    <property type="term" value="P:DNA recombination"/>
    <property type="evidence" value="ECO:0007669"/>
    <property type="project" value="UniProtKB-UniRule"/>
</dbReference>
<dbReference type="GO" id="GO:0006355">
    <property type="term" value="P:regulation of DNA-templated transcription"/>
    <property type="evidence" value="ECO:0007669"/>
    <property type="project" value="UniProtKB-UniRule"/>
</dbReference>
<dbReference type="GO" id="GO:0006417">
    <property type="term" value="P:regulation of translation"/>
    <property type="evidence" value="ECO:0007669"/>
    <property type="project" value="UniProtKB-UniRule"/>
</dbReference>
<dbReference type="CDD" id="cd13836">
    <property type="entry name" value="IHF_B"/>
    <property type="match status" value="1"/>
</dbReference>
<dbReference type="FunFam" id="4.10.520.10:FF:000003">
    <property type="entry name" value="Integration host factor subunit beta"/>
    <property type="match status" value="1"/>
</dbReference>
<dbReference type="Gene3D" id="4.10.520.10">
    <property type="entry name" value="IHF-like DNA-binding proteins"/>
    <property type="match status" value="1"/>
</dbReference>
<dbReference type="HAMAP" id="MF_00381">
    <property type="entry name" value="IHF_beta"/>
    <property type="match status" value="1"/>
</dbReference>
<dbReference type="InterPro" id="IPR000119">
    <property type="entry name" value="Hist_DNA-bd"/>
</dbReference>
<dbReference type="InterPro" id="IPR020816">
    <property type="entry name" value="Histone-like_DNA-bd_CS"/>
</dbReference>
<dbReference type="InterPro" id="IPR010992">
    <property type="entry name" value="IHF-like_DNA-bd_dom_sf"/>
</dbReference>
<dbReference type="InterPro" id="IPR005685">
    <property type="entry name" value="IHF_beta"/>
</dbReference>
<dbReference type="NCBIfam" id="TIGR00988">
    <property type="entry name" value="hip"/>
    <property type="match status" value="1"/>
</dbReference>
<dbReference type="NCBIfam" id="NF001222">
    <property type="entry name" value="PRK00199.1"/>
    <property type="match status" value="1"/>
</dbReference>
<dbReference type="PANTHER" id="PTHR33175">
    <property type="entry name" value="DNA-BINDING PROTEIN HU"/>
    <property type="match status" value="1"/>
</dbReference>
<dbReference type="PANTHER" id="PTHR33175:SF5">
    <property type="entry name" value="INTEGRATION HOST FACTOR SUBUNIT BETA"/>
    <property type="match status" value="1"/>
</dbReference>
<dbReference type="Pfam" id="PF00216">
    <property type="entry name" value="Bac_DNA_binding"/>
    <property type="match status" value="1"/>
</dbReference>
<dbReference type="PRINTS" id="PR01727">
    <property type="entry name" value="DNABINDINGHU"/>
</dbReference>
<dbReference type="SMART" id="SM00411">
    <property type="entry name" value="BHL"/>
    <property type="match status" value="1"/>
</dbReference>
<dbReference type="SUPFAM" id="SSF47729">
    <property type="entry name" value="IHF-like DNA-binding proteins"/>
    <property type="match status" value="1"/>
</dbReference>
<dbReference type="PROSITE" id="PS00045">
    <property type="entry name" value="HISTONE_LIKE"/>
    <property type="match status" value="1"/>
</dbReference>
<keyword id="KW-0233">DNA recombination</keyword>
<keyword id="KW-0238">DNA-binding</keyword>
<keyword id="KW-0804">Transcription</keyword>
<keyword id="KW-0805">Transcription regulation</keyword>
<keyword id="KW-0810">Translation regulation</keyword>
<accession>B4TRU3</accession>
<organism>
    <name type="scientific">Salmonella schwarzengrund (strain CVM19633)</name>
    <dbReference type="NCBI Taxonomy" id="439843"/>
    <lineage>
        <taxon>Bacteria</taxon>
        <taxon>Pseudomonadati</taxon>
        <taxon>Pseudomonadota</taxon>
        <taxon>Gammaproteobacteria</taxon>
        <taxon>Enterobacterales</taxon>
        <taxon>Enterobacteriaceae</taxon>
        <taxon>Salmonella</taxon>
    </lineage>
</organism>
<name>IHFB_SALSV</name>
<evidence type="ECO:0000255" key="1">
    <source>
        <dbReference type="HAMAP-Rule" id="MF_00381"/>
    </source>
</evidence>
<proteinExistence type="inferred from homology"/>
<comment type="function">
    <text evidence="1">This protein is one of the two subunits of integration host factor, a specific DNA-binding protein that functions in genetic recombination as well as in transcriptional and translational control.</text>
</comment>
<comment type="subunit">
    <text evidence="1">Heterodimer of an alpha and a beta chain.</text>
</comment>
<comment type="similarity">
    <text evidence="1">Belongs to the bacterial histone-like protein family.</text>
</comment>
<sequence>MTKSELIERLATQQSHIPAKAVEDAVKEMLEHMASTLAQGERIEIRGFGSFSLHYRAPRTGRNPKTGDKVELEGKYVPHFKPGKELRDRANIYG</sequence>
<protein>
    <recommendedName>
        <fullName evidence="1">Integration host factor subunit beta</fullName>
        <shortName evidence="1">IHF-beta</shortName>
    </recommendedName>
</protein>
<reference key="1">
    <citation type="journal article" date="2011" name="J. Bacteriol.">
        <title>Comparative genomics of 28 Salmonella enterica isolates: evidence for CRISPR-mediated adaptive sublineage evolution.</title>
        <authorList>
            <person name="Fricke W.F."/>
            <person name="Mammel M.K."/>
            <person name="McDermott P.F."/>
            <person name="Tartera C."/>
            <person name="White D.G."/>
            <person name="Leclerc J.E."/>
            <person name="Ravel J."/>
            <person name="Cebula T.A."/>
        </authorList>
    </citation>
    <scope>NUCLEOTIDE SEQUENCE [LARGE SCALE GENOMIC DNA]</scope>
    <source>
        <strain>CVM19633</strain>
    </source>
</reference>